<feature type="chain" id="PRO_0000057972" description="Protein N-terminal asparagine amidohydrolase">
    <location>
        <begin position="1"/>
        <end position="310"/>
    </location>
</feature>
<protein>
    <recommendedName>
        <fullName evidence="3">Protein N-terminal asparagine amidohydrolase</fullName>
        <ecNumber evidence="2">3.5.1.121</ecNumber>
    </recommendedName>
    <alternativeName>
        <fullName>Protein NH2-terminal asparagine amidohydrolase</fullName>
        <shortName>PNAA</shortName>
    </alternativeName>
    <alternativeName>
        <fullName>Protein NH2-terminal asparagine deamidase</fullName>
        <shortName>PNAD</shortName>
        <shortName>Protein N-terminal Asn amidase</shortName>
        <shortName>Protein NTN-amidase</shortName>
    </alternativeName>
</protein>
<keyword id="KW-0963">Cytoplasm</keyword>
<keyword id="KW-0378">Hydrolase</keyword>
<keyword id="KW-1185">Reference proteome</keyword>
<reference key="1">
    <citation type="journal article" date="1996" name="J. Biol. Chem.">
        <title>A mouse amidase specific for N-terminal asparagine. The gene, the enzyme, and their function in the N-end rule pathway.</title>
        <authorList>
            <person name="Grigoryev S."/>
            <person name="Stewart A.E."/>
            <person name="Kwon Y.T."/>
            <person name="Arfin S.M."/>
            <person name="Bradshaw R.A."/>
            <person name="Jenkins N.A."/>
            <person name="Copeland N.G."/>
            <person name="Varshavsky A."/>
        </authorList>
    </citation>
    <scope>NUCLEOTIDE SEQUENCE [GENOMIC DNA / MRNA]</scope>
    <scope>FUNCTION</scope>
    <scope>CATALYTIC ACTIVITY</scope>
    <source>
        <strain>C129</strain>
    </source>
</reference>
<reference key="2">
    <citation type="journal article" date="2004" name="Genome Res.">
        <title>The status, quality, and expansion of the NIH full-length cDNA project: the Mammalian Gene Collection (MGC).</title>
        <authorList>
            <consortium name="The MGC Project Team"/>
        </authorList>
    </citation>
    <scope>NUCLEOTIDE SEQUENCE [LARGE SCALE MRNA]</scope>
    <source>
        <strain>Czech II</strain>
        <tissue>Mammary gland</tissue>
    </source>
</reference>
<reference key="3">
    <citation type="journal article" date="2010" name="Cell">
        <title>A tissue-specific atlas of mouse protein phosphorylation and expression.</title>
        <authorList>
            <person name="Huttlin E.L."/>
            <person name="Jedrychowski M.P."/>
            <person name="Elias J.E."/>
            <person name="Goswami T."/>
            <person name="Rad R."/>
            <person name="Beausoleil S.A."/>
            <person name="Villen J."/>
            <person name="Haas W."/>
            <person name="Sowa M.E."/>
            <person name="Gygi S.P."/>
        </authorList>
    </citation>
    <scope>IDENTIFICATION BY MASS SPECTROMETRY [LARGE SCALE ANALYSIS]</scope>
    <source>
        <tissue>Spleen</tissue>
    </source>
</reference>
<name>NTAN1_MOUSE</name>
<accession>Q64311</accession>
<evidence type="ECO:0000250" key="1">
    <source>
        <dbReference type="UniProtKB" id="Q28955"/>
    </source>
</evidence>
<evidence type="ECO:0000269" key="2">
    <source>
    </source>
</evidence>
<evidence type="ECO:0000303" key="3">
    <source>
    </source>
</evidence>
<evidence type="ECO:0000312" key="4">
    <source>
        <dbReference type="MGI" id="MGI:108471"/>
    </source>
</evidence>
<comment type="function">
    <text evidence="2">N-terminal asparagine deamidase that mediates deamidation of N-terminal asparagine residues to aspartate. Required for the ubiquitin-dependent turnover of intracellular proteins that initiate with Met-Asn. These proteins are acetylated on the retained initiator methionine and can subsequently be modified by the removal of N-acetyl methionine by acylaminoacid hydrolase (AAH). Conversion of the resulting N-terminal asparagine to aspartate by NTAN1/PNAD renders the protein susceptible to arginylation, polyubiquitination and degradation as specified by the N-end rule. This enzyme does not act on substrates with internal or C-terminal asparagines and does not act on glutamine residues in any position.</text>
</comment>
<comment type="catalytic activity">
    <reaction evidence="2">
        <text>N-terminal L-asparaginyl-[protein] + H2O + H(+) = N-terminal L-aspartyl-[protein] + NH4(+)</text>
        <dbReference type="Rhea" id="RHEA:50676"/>
        <dbReference type="Rhea" id="RHEA-COMP:12669"/>
        <dbReference type="Rhea" id="RHEA-COMP:12776"/>
        <dbReference type="ChEBI" id="CHEBI:15377"/>
        <dbReference type="ChEBI" id="CHEBI:15378"/>
        <dbReference type="ChEBI" id="CHEBI:28938"/>
        <dbReference type="ChEBI" id="CHEBI:50348"/>
        <dbReference type="ChEBI" id="CHEBI:64720"/>
        <dbReference type="EC" id="3.5.1.121"/>
    </reaction>
</comment>
<comment type="subunit">
    <text evidence="1">Monomer.</text>
</comment>
<comment type="subcellular location">
    <subcellularLocation>
        <location evidence="1">Cytoplasm</location>
    </subcellularLocation>
</comment>
<gene>
    <name evidence="3 4" type="primary">Ntan1</name>
</gene>
<proteinExistence type="evidence at protein level"/>
<organism>
    <name type="scientific">Mus musculus</name>
    <name type="common">Mouse</name>
    <dbReference type="NCBI Taxonomy" id="10090"/>
    <lineage>
        <taxon>Eukaryota</taxon>
        <taxon>Metazoa</taxon>
        <taxon>Chordata</taxon>
        <taxon>Craniata</taxon>
        <taxon>Vertebrata</taxon>
        <taxon>Euteleostomi</taxon>
        <taxon>Mammalia</taxon>
        <taxon>Eutheria</taxon>
        <taxon>Euarchontoglires</taxon>
        <taxon>Glires</taxon>
        <taxon>Rodentia</taxon>
        <taxon>Myomorpha</taxon>
        <taxon>Muroidea</taxon>
        <taxon>Muridae</taxon>
        <taxon>Murinae</taxon>
        <taxon>Mus</taxon>
        <taxon>Mus</taxon>
    </lineage>
</organism>
<dbReference type="EC" id="3.5.1.121" evidence="2"/>
<dbReference type="EMBL" id="U57692">
    <property type="protein sequence ID" value="AAB66490.1"/>
    <property type="molecule type" value="mRNA"/>
</dbReference>
<dbReference type="EMBL" id="U57691">
    <property type="protein sequence ID" value="AAC52885.1"/>
    <property type="molecule type" value="Genomic_DNA"/>
</dbReference>
<dbReference type="EMBL" id="BC030172">
    <property type="protein sequence ID" value="AAH30172.1"/>
    <property type="molecule type" value="mRNA"/>
</dbReference>
<dbReference type="CCDS" id="CCDS27969.1"/>
<dbReference type="RefSeq" id="NP_035076.1">
    <property type="nucleotide sequence ID" value="NM_010946.4"/>
</dbReference>
<dbReference type="SMR" id="Q64311"/>
<dbReference type="FunCoup" id="Q64311">
    <property type="interactions" value="3891"/>
</dbReference>
<dbReference type="STRING" id="10090.ENSMUSP00000023362"/>
<dbReference type="PhosphoSitePlus" id="Q64311"/>
<dbReference type="PaxDb" id="10090-ENSMUSP00000023362"/>
<dbReference type="PeptideAtlas" id="Q64311"/>
<dbReference type="ProteomicsDB" id="252863"/>
<dbReference type="Pumba" id="Q64311"/>
<dbReference type="Antibodypedia" id="24973">
    <property type="antibodies" value="91 antibodies from 20 providers"/>
</dbReference>
<dbReference type="DNASU" id="18203"/>
<dbReference type="Ensembl" id="ENSMUST00000023362.15">
    <property type="protein sequence ID" value="ENSMUSP00000023362.9"/>
    <property type="gene ID" value="ENSMUSG00000022681.16"/>
</dbReference>
<dbReference type="GeneID" id="18203"/>
<dbReference type="KEGG" id="mmu:18203"/>
<dbReference type="UCSC" id="uc007ygk.2">
    <property type="organism name" value="mouse"/>
</dbReference>
<dbReference type="AGR" id="MGI:108471"/>
<dbReference type="CTD" id="123803"/>
<dbReference type="MGI" id="MGI:108471">
    <property type="gene designation" value="Ntan1"/>
</dbReference>
<dbReference type="VEuPathDB" id="HostDB:ENSMUSG00000022681"/>
<dbReference type="eggNOG" id="ENOG502QSQW">
    <property type="taxonomic scope" value="Eukaryota"/>
</dbReference>
<dbReference type="GeneTree" id="ENSGT00390000016730"/>
<dbReference type="HOGENOM" id="CLU_077981_1_0_1"/>
<dbReference type="InParanoid" id="Q64311"/>
<dbReference type="OMA" id="WRETFPM"/>
<dbReference type="OrthoDB" id="539995at2759"/>
<dbReference type="PhylomeDB" id="Q64311"/>
<dbReference type="TreeFam" id="TF325597"/>
<dbReference type="BRENDA" id="3.5.1.121">
    <property type="organism ID" value="3474"/>
</dbReference>
<dbReference type="BioGRID-ORCS" id="18203">
    <property type="hits" value="4 hits in 77 CRISPR screens"/>
</dbReference>
<dbReference type="ChiTaRS" id="Ntan1">
    <property type="organism name" value="mouse"/>
</dbReference>
<dbReference type="PRO" id="PR:Q64311"/>
<dbReference type="Proteomes" id="UP000000589">
    <property type="component" value="Chromosome 16"/>
</dbReference>
<dbReference type="RNAct" id="Q64311">
    <property type="molecule type" value="protein"/>
</dbReference>
<dbReference type="Bgee" id="ENSMUSG00000022681">
    <property type="expression patterns" value="Expressed in cortical plate and 269 other cell types or tissues"/>
</dbReference>
<dbReference type="ExpressionAtlas" id="Q64311">
    <property type="expression patterns" value="baseline and differential"/>
</dbReference>
<dbReference type="GO" id="GO:0005737">
    <property type="term" value="C:cytoplasm"/>
    <property type="evidence" value="ECO:0000314"/>
    <property type="project" value="MGI"/>
</dbReference>
<dbReference type="GO" id="GO:0005634">
    <property type="term" value="C:nucleus"/>
    <property type="evidence" value="ECO:0000314"/>
    <property type="project" value="MGI"/>
</dbReference>
<dbReference type="GO" id="GO:0008418">
    <property type="term" value="F:protein-N-terminal asparagine amidohydrolase activity"/>
    <property type="evidence" value="ECO:0000314"/>
    <property type="project" value="MGI"/>
</dbReference>
<dbReference type="GO" id="GO:0008344">
    <property type="term" value="P:adult locomotory behavior"/>
    <property type="evidence" value="ECO:0000315"/>
    <property type="project" value="MGI"/>
</dbReference>
<dbReference type="GO" id="GO:0007613">
    <property type="term" value="P:memory"/>
    <property type="evidence" value="ECO:0000315"/>
    <property type="project" value="MGI"/>
</dbReference>
<dbReference type="GO" id="GO:0006511">
    <property type="term" value="P:ubiquitin-dependent protein catabolic process"/>
    <property type="evidence" value="ECO:0007669"/>
    <property type="project" value="Ensembl"/>
</dbReference>
<dbReference type="InterPro" id="IPR026750">
    <property type="entry name" value="NTAN1"/>
</dbReference>
<dbReference type="PANTHER" id="PTHR12498">
    <property type="entry name" value="N-TERMINAL ASPARAGINE AMIDOHYDROLASE"/>
    <property type="match status" value="1"/>
</dbReference>
<dbReference type="PANTHER" id="PTHR12498:SF0">
    <property type="entry name" value="PROTEIN N-TERMINAL ASPARAGINE AMIDOHYDROLASE"/>
    <property type="match status" value="1"/>
</dbReference>
<dbReference type="Pfam" id="PF14736">
    <property type="entry name" value="N_Asn_amidohyd"/>
    <property type="match status" value="1"/>
</dbReference>
<sequence>MPLLVDGQRVRLPRSAVELVRAHPPLEERARLLRGQSVQQVGPQGLLYVQQRELAVTSPKDGSISILGSDDATTCHIVVLRHTGNGATCLTHCDGSDTKAEVPLIMSSIKSFSEHAECGRLEVHLVGGFSDDRQLSQKLTHQLLSEFDKQDDDIHLVTLCVTELNDREENENHFPIIYGIAVNIKTAEIYRASFQDRGPEEQLRAARALAGGPMISIYDAKTEQLRIGPCSWTPFPQVDFWLQQDDKQILESLSTSPLAEPPHFVEHIRSTLMFLKKFPSPENILFPGNKALLYKKNKDGLWEKISSPGS</sequence>